<name>HSLU_BURMS</name>
<sequence>MSTMTPAEIVSELDKHIIGQAKAKKAVAVALRNRWRRQQVAEPLRQEITPKNILMIGPTGVGKTEIARRLAKLADAPFIKIEATKFTEVGYVGRDVDSIVRDLIEISVKQTRETEMRKVRSKATDLAEDRILDVLLPQPRAVGFGASAEHANDDNNATRQTFRKRLREGQLDDKEIELDIEQPAVGMDIMAPPGMEEMTEQIRSMFSNLGSGKKQRRKVKIREALKLLTDEEAAKMLNDEEVKTKAVQNVEQNGIVFLDEIDKITSRNHEGGGGEVSRQGVQRDLLPLVEGTTINTKYGMVKTDHILFIASGAFHLAKPSDLIPELQGRFPIRVELDSLSVKDFEAILVATDASLVKQYQALLATEDVKLEFADDGIRRLAEIAYAVNEKTENIGARRLYTVIEKLLEEVSFAAGNHAGQSVTIDSAYVDRALGEVSKDEDLSRYVL</sequence>
<dbReference type="EMBL" id="CP000526">
    <property type="protein sequence ID" value="ABM51609.1"/>
    <property type="molecule type" value="Genomic_DNA"/>
</dbReference>
<dbReference type="RefSeq" id="WP_004198316.1">
    <property type="nucleotide sequence ID" value="NC_008785.1"/>
</dbReference>
<dbReference type="SMR" id="A1V7K6"/>
<dbReference type="GeneID" id="93058712"/>
<dbReference type="KEGG" id="bmv:BMASAVP1_A2915"/>
<dbReference type="HOGENOM" id="CLU_033123_0_0_4"/>
<dbReference type="GO" id="GO:0009376">
    <property type="term" value="C:HslUV protease complex"/>
    <property type="evidence" value="ECO:0007669"/>
    <property type="project" value="UniProtKB-UniRule"/>
</dbReference>
<dbReference type="GO" id="GO:0005524">
    <property type="term" value="F:ATP binding"/>
    <property type="evidence" value="ECO:0007669"/>
    <property type="project" value="UniProtKB-UniRule"/>
</dbReference>
<dbReference type="GO" id="GO:0016887">
    <property type="term" value="F:ATP hydrolysis activity"/>
    <property type="evidence" value="ECO:0007669"/>
    <property type="project" value="InterPro"/>
</dbReference>
<dbReference type="GO" id="GO:0008233">
    <property type="term" value="F:peptidase activity"/>
    <property type="evidence" value="ECO:0007669"/>
    <property type="project" value="InterPro"/>
</dbReference>
<dbReference type="GO" id="GO:0036402">
    <property type="term" value="F:proteasome-activating activity"/>
    <property type="evidence" value="ECO:0007669"/>
    <property type="project" value="UniProtKB-UniRule"/>
</dbReference>
<dbReference type="GO" id="GO:0043335">
    <property type="term" value="P:protein unfolding"/>
    <property type="evidence" value="ECO:0007669"/>
    <property type="project" value="UniProtKB-UniRule"/>
</dbReference>
<dbReference type="GO" id="GO:0051603">
    <property type="term" value="P:proteolysis involved in protein catabolic process"/>
    <property type="evidence" value="ECO:0007669"/>
    <property type="project" value="TreeGrafter"/>
</dbReference>
<dbReference type="CDD" id="cd19498">
    <property type="entry name" value="RecA-like_HslU"/>
    <property type="match status" value="1"/>
</dbReference>
<dbReference type="FunFam" id="3.40.50.300:FF:000213">
    <property type="entry name" value="ATP-dependent protease ATPase subunit HslU"/>
    <property type="match status" value="1"/>
</dbReference>
<dbReference type="FunFam" id="3.40.50.300:FF:000220">
    <property type="entry name" value="ATP-dependent protease ATPase subunit HslU"/>
    <property type="match status" value="1"/>
</dbReference>
<dbReference type="Gene3D" id="1.10.8.60">
    <property type="match status" value="1"/>
</dbReference>
<dbReference type="Gene3D" id="1.10.8.10">
    <property type="entry name" value="DNA helicase RuvA subunit, C-terminal domain"/>
    <property type="match status" value="2"/>
</dbReference>
<dbReference type="Gene3D" id="3.40.50.300">
    <property type="entry name" value="P-loop containing nucleotide triphosphate hydrolases"/>
    <property type="match status" value="2"/>
</dbReference>
<dbReference type="HAMAP" id="MF_00249">
    <property type="entry name" value="HslU"/>
    <property type="match status" value="1"/>
</dbReference>
<dbReference type="InterPro" id="IPR003593">
    <property type="entry name" value="AAA+_ATPase"/>
</dbReference>
<dbReference type="InterPro" id="IPR050052">
    <property type="entry name" value="ATP-dep_Clp_protease_ClpX"/>
</dbReference>
<dbReference type="InterPro" id="IPR003959">
    <property type="entry name" value="ATPase_AAA_core"/>
</dbReference>
<dbReference type="InterPro" id="IPR019489">
    <property type="entry name" value="Clp_ATPase_C"/>
</dbReference>
<dbReference type="InterPro" id="IPR004491">
    <property type="entry name" value="HslU"/>
</dbReference>
<dbReference type="InterPro" id="IPR027417">
    <property type="entry name" value="P-loop_NTPase"/>
</dbReference>
<dbReference type="NCBIfam" id="TIGR00390">
    <property type="entry name" value="hslU"/>
    <property type="match status" value="1"/>
</dbReference>
<dbReference type="NCBIfam" id="NF003544">
    <property type="entry name" value="PRK05201.1"/>
    <property type="match status" value="1"/>
</dbReference>
<dbReference type="PANTHER" id="PTHR48102">
    <property type="entry name" value="ATP-DEPENDENT CLP PROTEASE ATP-BINDING SUBUNIT CLPX-LIKE, MITOCHONDRIAL-RELATED"/>
    <property type="match status" value="1"/>
</dbReference>
<dbReference type="PANTHER" id="PTHR48102:SF3">
    <property type="entry name" value="ATP-DEPENDENT PROTEASE ATPASE SUBUNIT HSLU"/>
    <property type="match status" value="1"/>
</dbReference>
<dbReference type="Pfam" id="PF00004">
    <property type="entry name" value="AAA"/>
    <property type="match status" value="1"/>
</dbReference>
<dbReference type="Pfam" id="PF07724">
    <property type="entry name" value="AAA_2"/>
    <property type="match status" value="1"/>
</dbReference>
<dbReference type="SMART" id="SM00382">
    <property type="entry name" value="AAA"/>
    <property type="match status" value="1"/>
</dbReference>
<dbReference type="SMART" id="SM01086">
    <property type="entry name" value="ClpB_D2-small"/>
    <property type="match status" value="1"/>
</dbReference>
<dbReference type="SUPFAM" id="SSF52540">
    <property type="entry name" value="P-loop containing nucleoside triphosphate hydrolases"/>
    <property type="match status" value="1"/>
</dbReference>
<evidence type="ECO:0000255" key="1">
    <source>
        <dbReference type="HAMAP-Rule" id="MF_00249"/>
    </source>
</evidence>
<keyword id="KW-0067">ATP-binding</keyword>
<keyword id="KW-0143">Chaperone</keyword>
<keyword id="KW-0963">Cytoplasm</keyword>
<keyword id="KW-0547">Nucleotide-binding</keyword>
<keyword id="KW-0346">Stress response</keyword>
<proteinExistence type="inferred from homology"/>
<gene>
    <name evidence="1" type="primary">hslU</name>
    <name type="ordered locus">BMASAVP1_A2915</name>
</gene>
<reference key="1">
    <citation type="journal article" date="2010" name="Genome Biol. Evol.">
        <title>Continuing evolution of Burkholderia mallei through genome reduction and large-scale rearrangements.</title>
        <authorList>
            <person name="Losada L."/>
            <person name="Ronning C.M."/>
            <person name="DeShazer D."/>
            <person name="Woods D."/>
            <person name="Fedorova N."/>
            <person name="Kim H.S."/>
            <person name="Shabalina S.A."/>
            <person name="Pearson T.R."/>
            <person name="Brinkac L."/>
            <person name="Tan P."/>
            <person name="Nandi T."/>
            <person name="Crabtree J."/>
            <person name="Badger J."/>
            <person name="Beckstrom-Sternberg S."/>
            <person name="Saqib M."/>
            <person name="Schutzer S.E."/>
            <person name="Keim P."/>
            <person name="Nierman W.C."/>
        </authorList>
    </citation>
    <scope>NUCLEOTIDE SEQUENCE [LARGE SCALE GENOMIC DNA]</scope>
    <source>
        <strain>SAVP1</strain>
    </source>
</reference>
<protein>
    <recommendedName>
        <fullName evidence="1">ATP-dependent protease ATPase subunit HslU</fullName>
    </recommendedName>
    <alternativeName>
        <fullName evidence="1">Unfoldase HslU</fullName>
    </alternativeName>
</protein>
<feature type="chain" id="PRO_1000012716" description="ATP-dependent protease ATPase subunit HslU">
    <location>
        <begin position="1"/>
        <end position="447"/>
    </location>
</feature>
<feature type="binding site" evidence="1">
    <location>
        <position position="18"/>
    </location>
    <ligand>
        <name>ATP</name>
        <dbReference type="ChEBI" id="CHEBI:30616"/>
    </ligand>
</feature>
<feature type="binding site" evidence="1">
    <location>
        <begin position="60"/>
        <end position="65"/>
    </location>
    <ligand>
        <name>ATP</name>
        <dbReference type="ChEBI" id="CHEBI:30616"/>
    </ligand>
</feature>
<feature type="binding site" evidence="1">
    <location>
        <position position="259"/>
    </location>
    <ligand>
        <name>ATP</name>
        <dbReference type="ChEBI" id="CHEBI:30616"/>
    </ligand>
</feature>
<feature type="binding site" evidence="1">
    <location>
        <position position="325"/>
    </location>
    <ligand>
        <name>ATP</name>
        <dbReference type="ChEBI" id="CHEBI:30616"/>
    </ligand>
</feature>
<feature type="binding site" evidence="1">
    <location>
        <position position="397"/>
    </location>
    <ligand>
        <name>ATP</name>
        <dbReference type="ChEBI" id="CHEBI:30616"/>
    </ligand>
</feature>
<organism>
    <name type="scientific">Burkholderia mallei (strain SAVP1)</name>
    <dbReference type="NCBI Taxonomy" id="320388"/>
    <lineage>
        <taxon>Bacteria</taxon>
        <taxon>Pseudomonadati</taxon>
        <taxon>Pseudomonadota</taxon>
        <taxon>Betaproteobacteria</taxon>
        <taxon>Burkholderiales</taxon>
        <taxon>Burkholderiaceae</taxon>
        <taxon>Burkholderia</taxon>
        <taxon>pseudomallei group</taxon>
    </lineage>
</organism>
<comment type="function">
    <text evidence="1">ATPase subunit of a proteasome-like degradation complex; this subunit has chaperone activity. The binding of ATP and its subsequent hydrolysis by HslU are essential for unfolding of protein substrates subsequently hydrolyzed by HslV. HslU recognizes the N-terminal part of its protein substrates and unfolds these before they are guided to HslV for hydrolysis.</text>
</comment>
<comment type="subunit">
    <text evidence="1">A double ring-shaped homohexamer of HslV is capped on each side by a ring-shaped HslU homohexamer. The assembly of the HslU/HslV complex is dependent on binding of ATP.</text>
</comment>
<comment type="subcellular location">
    <subcellularLocation>
        <location evidence="1">Cytoplasm</location>
    </subcellularLocation>
</comment>
<comment type="similarity">
    <text evidence="1">Belongs to the ClpX chaperone family. HslU subfamily.</text>
</comment>
<accession>A1V7K6</accession>